<dbReference type="EMBL" id="MZ254628">
    <property type="protein sequence ID" value="QXJ40772.1"/>
    <property type="molecule type" value="mRNA"/>
</dbReference>
<dbReference type="EMBL" id="DS499596">
    <property type="protein sequence ID" value="EDP52283.1"/>
    <property type="status" value="ALT_SEQ"/>
    <property type="molecule type" value="Genomic_DNA"/>
</dbReference>
<dbReference type="EnsemblFungi" id="EDP52283">
    <property type="protein sequence ID" value="EDP52283"/>
    <property type="gene ID" value="AFUB_034470"/>
</dbReference>
<dbReference type="VEuPathDB" id="FungiDB:AFUB_034470"/>
<dbReference type="HOGENOM" id="CLU_396352_0_0_1"/>
<dbReference type="OrthoDB" id="99863at5052"/>
<dbReference type="Proteomes" id="UP000001699">
    <property type="component" value="Unassembled WGS sequence"/>
</dbReference>
<dbReference type="GO" id="GO:0005634">
    <property type="term" value="C:nucleus"/>
    <property type="evidence" value="ECO:0007669"/>
    <property type="project" value="UniProtKB-SubCell"/>
</dbReference>
<dbReference type="GO" id="GO:0003677">
    <property type="term" value="F:DNA binding"/>
    <property type="evidence" value="ECO:0007669"/>
    <property type="project" value="UniProtKB-KW"/>
</dbReference>
<dbReference type="GO" id="GO:0000981">
    <property type="term" value="F:DNA-binding transcription factor activity, RNA polymerase II-specific"/>
    <property type="evidence" value="ECO:0007669"/>
    <property type="project" value="InterPro"/>
</dbReference>
<dbReference type="GO" id="GO:0008270">
    <property type="term" value="F:zinc ion binding"/>
    <property type="evidence" value="ECO:0007669"/>
    <property type="project" value="InterPro"/>
</dbReference>
<dbReference type="GO" id="GO:0006351">
    <property type="term" value="P:DNA-templated transcription"/>
    <property type="evidence" value="ECO:0007669"/>
    <property type="project" value="InterPro"/>
</dbReference>
<dbReference type="CDD" id="cd12148">
    <property type="entry name" value="fungal_TF_MHR"/>
    <property type="match status" value="1"/>
</dbReference>
<dbReference type="CDD" id="cd00067">
    <property type="entry name" value="GAL4"/>
    <property type="match status" value="1"/>
</dbReference>
<dbReference type="Gene3D" id="4.10.240.10">
    <property type="entry name" value="Zn(2)-C6 fungal-type DNA-binding domain"/>
    <property type="match status" value="1"/>
</dbReference>
<dbReference type="InterPro" id="IPR050987">
    <property type="entry name" value="AtrR-like"/>
</dbReference>
<dbReference type="InterPro" id="IPR007219">
    <property type="entry name" value="Transcription_factor_dom_fun"/>
</dbReference>
<dbReference type="InterPro" id="IPR036864">
    <property type="entry name" value="Zn2-C6_fun-type_DNA-bd_sf"/>
</dbReference>
<dbReference type="InterPro" id="IPR001138">
    <property type="entry name" value="Zn2Cys6_DnaBD"/>
</dbReference>
<dbReference type="PANTHER" id="PTHR46910:SF1">
    <property type="entry name" value="MISCELLANEOUS ZN(II)2CYS6 TRANSCRIPTION FACTOR (EUROFUNG)-RELATED"/>
    <property type="match status" value="1"/>
</dbReference>
<dbReference type="PANTHER" id="PTHR46910">
    <property type="entry name" value="TRANSCRIPTION FACTOR PDR1"/>
    <property type="match status" value="1"/>
</dbReference>
<dbReference type="Pfam" id="PF04082">
    <property type="entry name" value="Fungal_trans"/>
    <property type="match status" value="1"/>
</dbReference>
<dbReference type="Pfam" id="PF00172">
    <property type="entry name" value="Zn_clus"/>
    <property type="match status" value="1"/>
</dbReference>
<dbReference type="SMART" id="SM00906">
    <property type="entry name" value="Fungal_trans"/>
    <property type="match status" value="1"/>
</dbReference>
<dbReference type="SMART" id="SM00066">
    <property type="entry name" value="GAL4"/>
    <property type="match status" value="1"/>
</dbReference>
<dbReference type="SUPFAM" id="SSF57701">
    <property type="entry name" value="Zn2/Cys6 DNA-binding domain"/>
    <property type="match status" value="1"/>
</dbReference>
<dbReference type="PROSITE" id="PS00463">
    <property type="entry name" value="ZN2_CY6_FUNGAL_1"/>
    <property type="match status" value="1"/>
</dbReference>
<dbReference type="PROSITE" id="PS50048">
    <property type="entry name" value="ZN2_CY6_FUNGAL_2"/>
    <property type="match status" value="1"/>
</dbReference>
<comment type="function">
    <text evidence="4">Transcription factor that regulates the expression of the gene cluster that mediates the biosynthesis of sphingofungins, bioactive molecules acting as sphingolipid inhibitors via inhibiting serine palmitoyl transferase (SPT).</text>
</comment>
<comment type="subcellular location">
    <subcellularLocation>
        <location evidence="1">Nucleus</location>
    </subcellularLocation>
</comment>
<comment type="disruption phenotype">
    <text evidence="4">Completely abolishes the production of sphingofungins.</text>
</comment>
<comment type="biotechnology">
    <text evidence="3">The sphingofungins A, B, C, and D, show a limited antifungal spectrum of activity but are especially effective against Cryptococcus species, fungal pathogens causing opportunistic infections in human.</text>
</comment>
<comment type="sequence caution" evidence="4">
    <conflict type="erroneous gene model prediction">
        <sequence resource="EMBL-CDS" id="EDP52283"/>
    </conflict>
</comment>
<protein>
    <recommendedName>
        <fullName evidence="5">Transcription factor sphG</fullName>
    </recommendedName>
    <alternativeName>
        <fullName evidence="5">Sphingofungin biosynthesis cluster protein G</fullName>
    </alternativeName>
</protein>
<reference key="1">
    <citation type="journal article" date="2022" name="ACS Chem. Biol.">
        <title>Biosynthesis of the sphingolipid inhibitors sphingofungins in filamentous fungi requires aminomalonate as a metabolic precursor.</title>
        <authorList>
            <person name="Bissell A.U."/>
            <person name="Rautschek J."/>
            <person name="Hoefgen S."/>
            <person name="Raguz L."/>
            <person name="Mattern D.J."/>
            <person name="Saeed N."/>
            <person name="Janevska S."/>
            <person name="Jojic K."/>
            <person name="Huang Y."/>
            <person name="Kufs J.E."/>
            <person name="Herboeck B."/>
            <person name="Guo H."/>
            <person name="Hillmann F."/>
            <person name="Beemelmanns C."/>
            <person name="Valiante V."/>
        </authorList>
    </citation>
    <scope>NUCLEOTIDE SEQUENCE [MRNA]</scope>
    <scope>FUNCTION</scope>
    <scope>DISRUPTION PHENOTYPE</scope>
    <source>
        <strain>CBS 144.89 / FGSC A1163 / CEA10</strain>
    </source>
</reference>
<reference key="2">
    <citation type="journal article" date="2008" name="PLoS Genet.">
        <title>Genomic islands in the pathogenic filamentous fungus Aspergillus fumigatus.</title>
        <authorList>
            <person name="Fedorova N.D."/>
            <person name="Khaldi N."/>
            <person name="Joardar V.S."/>
            <person name="Maiti R."/>
            <person name="Amedeo P."/>
            <person name="Anderson M.J."/>
            <person name="Crabtree J."/>
            <person name="Silva J.C."/>
            <person name="Badger J.H."/>
            <person name="Albarraq A."/>
            <person name="Angiuoli S."/>
            <person name="Bussey H."/>
            <person name="Bowyer P."/>
            <person name="Cotty P.J."/>
            <person name="Dyer P.S."/>
            <person name="Egan A."/>
            <person name="Galens K."/>
            <person name="Fraser-Liggett C.M."/>
            <person name="Haas B.J."/>
            <person name="Inman J.M."/>
            <person name="Kent R."/>
            <person name="Lemieux S."/>
            <person name="Malavazi I."/>
            <person name="Orvis J."/>
            <person name="Roemer T."/>
            <person name="Ronning C.M."/>
            <person name="Sundaram J.P."/>
            <person name="Sutton G."/>
            <person name="Turner G."/>
            <person name="Venter J.C."/>
            <person name="White O.R."/>
            <person name="Whitty B.R."/>
            <person name="Youngman P."/>
            <person name="Wolfe K.H."/>
            <person name="Goldman G.H."/>
            <person name="Wortman J.R."/>
            <person name="Jiang B."/>
            <person name="Denning D.W."/>
            <person name="Nierman W.C."/>
        </authorList>
    </citation>
    <scope>NUCLEOTIDE SEQUENCE [LARGE SCALE GENOMIC DNA]</scope>
    <source>
        <strain>CBS 144.89 / FGSC A1163 / CEA10</strain>
    </source>
</reference>
<reference key="3">
    <citation type="journal article" date="1992" name="J. Antibiot.">
        <title>Sphingofungins A, B, C, and D; a new family of antifungal agents. I. Fermentation, isolation, and biological activity.</title>
        <authorList>
            <person name="VanMiddlesworth F."/>
            <person name="Giacobbe R.A."/>
            <person name="Lopez M."/>
            <person name="Garrity G."/>
            <person name="Bland J.A."/>
            <person name="Bartizal K."/>
            <person name="Fromtling R.A."/>
            <person name="Polishook J."/>
            <person name="Zweerink M."/>
            <person name="Edison A.M."/>
        </authorList>
    </citation>
    <scope>BIOTECHNOLOGY</scope>
</reference>
<sequence>MAKELSRDEYTVCDQCRARKIRCSREKPSCRNCGRLGLQCEWSGQGKKCNQTTLLSHTILGMGSRLEQLETALADTQKSLKRLFDGSSTISPSARCPASPASPSPRLSDKRFPDSIQSAVFTRPLGRFLVDQDRDERCFGPTSLESLMLNIKDELLQSPDTDRHTVKECVLQAQRKIDHLVGQGEEIPIGGKAPPTMPPFAILEAMIEPYFTTTHGHFPIWSKKRFTEMATALRQSAPSERDLASIVCCNNLILMAMSADSPGSHQRESMMSKQTRKTSSIDFDLITGFLTNAKRAVSNIDQLVSPHLVNVQALVSLHIVAQVYLSIGLSETLLALAIRCAKSIGVHQWHAFQGRLSDDDVNERQNLSYCLYMLDKAVCWTAGSSPSIPVSDVHFDPRLVPSENGIPSSLVAKAEMARIEETVYLEIYAVHVQARDENQVRGFAAAIMSKLQVCLTETGVDLDQIQTSLDGSASNLQLAIRYLSVQLLLIWPHKHHPDPMFQQAPEVARMCLKLLLRLWHSPPDQGSQAVFSFFLASLPSLYLYEVLISILCGRGTNRDIDMLQEFVEMLQTITDCRAEASYNRRLYQLSLIVTDVVKARRTQHKRPKPTSEGPTDPYLMSELLSPATTGYSYMNSEVQETYDSRFDGGVFQDPDGSFAPMSSITSTSGELARGSDEFLSQLRSYGKSAPGNEHFDSLAMEALGESVLFWKGVNQGASADSPSVRCDLGERLNYI</sequence>
<organism>
    <name type="scientific">Aspergillus fumigatus (strain CBS 144.89 / FGSC A1163 / CEA10)</name>
    <name type="common">Neosartorya fumigata</name>
    <dbReference type="NCBI Taxonomy" id="451804"/>
    <lineage>
        <taxon>Eukaryota</taxon>
        <taxon>Fungi</taxon>
        <taxon>Dikarya</taxon>
        <taxon>Ascomycota</taxon>
        <taxon>Pezizomycotina</taxon>
        <taxon>Eurotiomycetes</taxon>
        <taxon>Eurotiomycetidae</taxon>
        <taxon>Eurotiales</taxon>
        <taxon>Aspergillaceae</taxon>
        <taxon>Aspergillus</taxon>
        <taxon>Aspergillus subgen. Fumigati</taxon>
    </lineage>
</organism>
<evidence type="ECO:0000255" key="1">
    <source>
        <dbReference type="PROSITE-ProRule" id="PRU00227"/>
    </source>
</evidence>
<evidence type="ECO:0000256" key="2">
    <source>
        <dbReference type="SAM" id="MobiDB-lite"/>
    </source>
</evidence>
<evidence type="ECO:0000269" key="3">
    <source>
    </source>
</evidence>
<evidence type="ECO:0000269" key="4">
    <source>
    </source>
</evidence>
<evidence type="ECO:0000303" key="5">
    <source>
    </source>
</evidence>
<gene>
    <name evidence="5" type="primary">sphG</name>
    <name type="ORF">AFUB_034470</name>
</gene>
<keyword id="KW-0238">DNA-binding</keyword>
<keyword id="KW-0479">Metal-binding</keyword>
<keyword id="KW-0539">Nucleus</keyword>
<keyword id="KW-0804">Transcription</keyword>
<keyword id="KW-0805">Transcription regulation</keyword>
<accession>A0A8F5CBH1</accession>
<accession>B0XZV1</accession>
<feature type="chain" id="PRO_0000461282" description="Transcription factor sphG">
    <location>
        <begin position="1"/>
        <end position="735"/>
    </location>
</feature>
<feature type="DNA-binding region" description="Zn(2)-C6 fungal-type" evidence="1">
    <location>
        <begin position="13"/>
        <end position="40"/>
    </location>
</feature>
<feature type="region of interest" description="Disordered" evidence="2">
    <location>
        <begin position="89"/>
        <end position="110"/>
    </location>
</feature>
<feature type="compositionally biased region" description="Low complexity" evidence="2">
    <location>
        <begin position="91"/>
        <end position="106"/>
    </location>
</feature>
<name>SPHG_ASPFC</name>
<proteinExistence type="evidence at protein level"/>